<feature type="chain" id="PRO_0000147911" description="Phosphoglucosamine mutase">
    <location>
        <begin position="1"/>
        <end position="450"/>
    </location>
</feature>
<feature type="active site" description="Phosphoserine intermediate" evidence="1">
    <location>
        <position position="101"/>
    </location>
</feature>
<feature type="binding site" description="via phosphate group" evidence="1">
    <location>
        <position position="101"/>
    </location>
    <ligand>
        <name>Mg(2+)</name>
        <dbReference type="ChEBI" id="CHEBI:18420"/>
    </ligand>
</feature>
<feature type="binding site" evidence="1">
    <location>
        <position position="241"/>
    </location>
    <ligand>
        <name>Mg(2+)</name>
        <dbReference type="ChEBI" id="CHEBI:18420"/>
    </ligand>
</feature>
<feature type="binding site" evidence="1">
    <location>
        <position position="243"/>
    </location>
    <ligand>
        <name>Mg(2+)</name>
        <dbReference type="ChEBI" id="CHEBI:18420"/>
    </ligand>
</feature>
<feature type="binding site" evidence="1">
    <location>
        <position position="245"/>
    </location>
    <ligand>
        <name>Mg(2+)</name>
        <dbReference type="ChEBI" id="CHEBI:18420"/>
    </ligand>
</feature>
<feature type="modified residue" description="Phosphoserine" evidence="1">
    <location>
        <position position="101"/>
    </location>
</feature>
<gene>
    <name evidence="1" type="primary">glmM</name>
    <name type="ordered locus">lmo2118</name>
</gene>
<sequence>MGKYFGTDGVRGVANSELTPELAFRLGRMGGYVLTRHVGEHPRVLVARDTRISGEMLESALIAGLVSVGIEVMRLGVISTPGVAYLTKAQGASASVMISASHNPVDDNGIKFFGSDGFKLSDDQEEEIEQLLDTAEDTLPRPSGEGLGTVSDYFEGKQKYIQYLKQTIENDFNGYHIALDCANGATSGLATHLFADLDADISSMGASPNGLNINDGVGSTHPEALAAFVLDKKADVGLAFDGDGDRVIAIDEIGQIVDGDKIMFICAKYLREQGLLNNNTIVSTVMSNLGFYKGLKELEIEDVQTAVGDRYVVEAMREGNYNLGGEQSGHIIFLDHNTTGDGLLSGIQLINVMKATGKKLSELAAEMKTFPQKLENIRVSDKNHVTDNPKVSKVIDEVEAEMAGNGRVLVRPSGTEPLVRVMVEAATKEETDEYCERISAVVRSEMALND</sequence>
<reference key="1">
    <citation type="journal article" date="2001" name="Science">
        <title>Comparative genomics of Listeria species.</title>
        <authorList>
            <person name="Glaser P."/>
            <person name="Frangeul L."/>
            <person name="Buchrieser C."/>
            <person name="Rusniok C."/>
            <person name="Amend A."/>
            <person name="Baquero F."/>
            <person name="Berche P."/>
            <person name="Bloecker H."/>
            <person name="Brandt P."/>
            <person name="Chakraborty T."/>
            <person name="Charbit A."/>
            <person name="Chetouani F."/>
            <person name="Couve E."/>
            <person name="de Daruvar A."/>
            <person name="Dehoux P."/>
            <person name="Domann E."/>
            <person name="Dominguez-Bernal G."/>
            <person name="Duchaud E."/>
            <person name="Durant L."/>
            <person name="Dussurget O."/>
            <person name="Entian K.-D."/>
            <person name="Fsihi H."/>
            <person name="Garcia-del Portillo F."/>
            <person name="Garrido P."/>
            <person name="Gautier L."/>
            <person name="Goebel W."/>
            <person name="Gomez-Lopez N."/>
            <person name="Hain T."/>
            <person name="Hauf J."/>
            <person name="Jackson D."/>
            <person name="Jones L.-M."/>
            <person name="Kaerst U."/>
            <person name="Kreft J."/>
            <person name="Kuhn M."/>
            <person name="Kunst F."/>
            <person name="Kurapkat G."/>
            <person name="Madueno E."/>
            <person name="Maitournam A."/>
            <person name="Mata Vicente J."/>
            <person name="Ng E."/>
            <person name="Nedjari H."/>
            <person name="Nordsiek G."/>
            <person name="Novella S."/>
            <person name="de Pablos B."/>
            <person name="Perez-Diaz J.-C."/>
            <person name="Purcell R."/>
            <person name="Remmel B."/>
            <person name="Rose M."/>
            <person name="Schlueter T."/>
            <person name="Simoes N."/>
            <person name="Tierrez A."/>
            <person name="Vazquez-Boland J.-A."/>
            <person name="Voss H."/>
            <person name="Wehland J."/>
            <person name="Cossart P."/>
        </authorList>
    </citation>
    <scope>NUCLEOTIDE SEQUENCE [LARGE SCALE GENOMIC DNA]</scope>
    <source>
        <strain>ATCC BAA-679 / EGD-e</strain>
    </source>
</reference>
<keyword id="KW-0413">Isomerase</keyword>
<keyword id="KW-0460">Magnesium</keyword>
<keyword id="KW-0479">Metal-binding</keyword>
<keyword id="KW-0597">Phosphoprotein</keyword>
<keyword id="KW-1185">Reference proteome</keyword>
<name>GLMM_LISMO</name>
<accession>Q8Y5E6</accession>
<evidence type="ECO:0000255" key="1">
    <source>
        <dbReference type="HAMAP-Rule" id="MF_01554"/>
    </source>
</evidence>
<dbReference type="EC" id="5.4.2.10" evidence="1"/>
<dbReference type="EMBL" id="AL591982">
    <property type="protein sequence ID" value="CAD00196.1"/>
    <property type="molecule type" value="Genomic_DNA"/>
</dbReference>
<dbReference type="PIR" id="AF1339">
    <property type="entry name" value="AF1339"/>
</dbReference>
<dbReference type="RefSeq" id="NP_465642.1">
    <property type="nucleotide sequence ID" value="NC_003210.1"/>
</dbReference>
<dbReference type="RefSeq" id="WP_003722378.1">
    <property type="nucleotide sequence ID" value="NZ_CP149495.1"/>
</dbReference>
<dbReference type="SMR" id="Q8Y5E6"/>
<dbReference type="STRING" id="169963.gene:17594804"/>
<dbReference type="MoonProt" id="Q8Y5E6"/>
<dbReference type="PaxDb" id="169963-lmo2118"/>
<dbReference type="EnsemblBacteria" id="CAD00196">
    <property type="protein sequence ID" value="CAD00196"/>
    <property type="gene ID" value="CAD00196"/>
</dbReference>
<dbReference type="GeneID" id="984740"/>
<dbReference type="KEGG" id="lmo:lmo2118"/>
<dbReference type="PATRIC" id="fig|169963.11.peg.2170"/>
<dbReference type="eggNOG" id="COG1109">
    <property type="taxonomic scope" value="Bacteria"/>
</dbReference>
<dbReference type="HOGENOM" id="CLU_016950_7_0_9"/>
<dbReference type="OrthoDB" id="9806956at2"/>
<dbReference type="PhylomeDB" id="Q8Y5E6"/>
<dbReference type="BioCyc" id="LMON169963:LMO2118-MONOMER"/>
<dbReference type="Proteomes" id="UP000000817">
    <property type="component" value="Chromosome"/>
</dbReference>
<dbReference type="GO" id="GO:0005829">
    <property type="term" value="C:cytosol"/>
    <property type="evidence" value="ECO:0000318"/>
    <property type="project" value="GO_Central"/>
</dbReference>
<dbReference type="GO" id="GO:0000287">
    <property type="term" value="F:magnesium ion binding"/>
    <property type="evidence" value="ECO:0007669"/>
    <property type="project" value="UniProtKB-UniRule"/>
</dbReference>
<dbReference type="GO" id="GO:0008966">
    <property type="term" value="F:phosphoglucosamine mutase activity"/>
    <property type="evidence" value="ECO:0000318"/>
    <property type="project" value="GO_Central"/>
</dbReference>
<dbReference type="GO" id="GO:0004615">
    <property type="term" value="F:phosphomannomutase activity"/>
    <property type="evidence" value="ECO:0000318"/>
    <property type="project" value="GO_Central"/>
</dbReference>
<dbReference type="GO" id="GO:0005975">
    <property type="term" value="P:carbohydrate metabolic process"/>
    <property type="evidence" value="ECO:0007669"/>
    <property type="project" value="InterPro"/>
</dbReference>
<dbReference type="GO" id="GO:0009252">
    <property type="term" value="P:peptidoglycan biosynthetic process"/>
    <property type="evidence" value="ECO:0000318"/>
    <property type="project" value="GO_Central"/>
</dbReference>
<dbReference type="GO" id="GO:0006048">
    <property type="term" value="P:UDP-N-acetylglucosamine biosynthetic process"/>
    <property type="evidence" value="ECO:0000318"/>
    <property type="project" value="GO_Central"/>
</dbReference>
<dbReference type="CDD" id="cd05802">
    <property type="entry name" value="GlmM"/>
    <property type="match status" value="1"/>
</dbReference>
<dbReference type="FunFam" id="3.30.310.50:FF:000001">
    <property type="entry name" value="Phosphoglucosamine mutase"/>
    <property type="match status" value="1"/>
</dbReference>
<dbReference type="FunFam" id="3.40.120.10:FF:000001">
    <property type="entry name" value="Phosphoglucosamine mutase"/>
    <property type="match status" value="1"/>
</dbReference>
<dbReference type="FunFam" id="3.40.120.10:FF:000002">
    <property type="entry name" value="Phosphoglucosamine mutase"/>
    <property type="match status" value="1"/>
</dbReference>
<dbReference type="Gene3D" id="3.40.120.10">
    <property type="entry name" value="Alpha-D-Glucose-1,6-Bisphosphate, subunit A, domain 3"/>
    <property type="match status" value="3"/>
</dbReference>
<dbReference type="Gene3D" id="3.30.310.50">
    <property type="entry name" value="Alpha-D-phosphohexomutase, C-terminal domain"/>
    <property type="match status" value="1"/>
</dbReference>
<dbReference type="HAMAP" id="MF_01554_B">
    <property type="entry name" value="GlmM_B"/>
    <property type="match status" value="1"/>
</dbReference>
<dbReference type="InterPro" id="IPR005844">
    <property type="entry name" value="A-D-PHexomutase_a/b/a-I"/>
</dbReference>
<dbReference type="InterPro" id="IPR016055">
    <property type="entry name" value="A-D-PHexomutase_a/b/a-I/II/III"/>
</dbReference>
<dbReference type="InterPro" id="IPR005845">
    <property type="entry name" value="A-D-PHexomutase_a/b/a-II"/>
</dbReference>
<dbReference type="InterPro" id="IPR005846">
    <property type="entry name" value="A-D-PHexomutase_a/b/a-III"/>
</dbReference>
<dbReference type="InterPro" id="IPR005843">
    <property type="entry name" value="A-D-PHexomutase_C"/>
</dbReference>
<dbReference type="InterPro" id="IPR036900">
    <property type="entry name" value="A-D-PHexomutase_C_sf"/>
</dbReference>
<dbReference type="InterPro" id="IPR016066">
    <property type="entry name" value="A-D-PHexomutase_CS"/>
</dbReference>
<dbReference type="InterPro" id="IPR005841">
    <property type="entry name" value="Alpha-D-phosphohexomutase_SF"/>
</dbReference>
<dbReference type="InterPro" id="IPR018247">
    <property type="entry name" value="EF_Hand_1_Ca_BS"/>
</dbReference>
<dbReference type="InterPro" id="IPR006352">
    <property type="entry name" value="GlmM_bact"/>
</dbReference>
<dbReference type="InterPro" id="IPR050060">
    <property type="entry name" value="Phosphoglucosamine_mutase"/>
</dbReference>
<dbReference type="NCBIfam" id="TIGR01455">
    <property type="entry name" value="glmM"/>
    <property type="match status" value="1"/>
</dbReference>
<dbReference type="NCBIfam" id="NF008139">
    <property type="entry name" value="PRK10887.1"/>
    <property type="match status" value="1"/>
</dbReference>
<dbReference type="PANTHER" id="PTHR42946:SF1">
    <property type="entry name" value="PHOSPHOGLUCOMUTASE (ALPHA-D-GLUCOSE-1,6-BISPHOSPHATE-DEPENDENT)"/>
    <property type="match status" value="1"/>
</dbReference>
<dbReference type="PANTHER" id="PTHR42946">
    <property type="entry name" value="PHOSPHOHEXOSE MUTASE"/>
    <property type="match status" value="1"/>
</dbReference>
<dbReference type="Pfam" id="PF02878">
    <property type="entry name" value="PGM_PMM_I"/>
    <property type="match status" value="1"/>
</dbReference>
<dbReference type="Pfam" id="PF02879">
    <property type="entry name" value="PGM_PMM_II"/>
    <property type="match status" value="1"/>
</dbReference>
<dbReference type="Pfam" id="PF02880">
    <property type="entry name" value="PGM_PMM_III"/>
    <property type="match status" value="1"/>
</dbReference>
<dbReference type="Pfam" id="PF00408">
    <property type="entry name" value="PGM_PMM_IV"/>
    <property type="match status" value="1"/>
</dbReference>
<dbReference type="PRINTS" id="PR00509">
    <property type="entry name" value="PGMPMM"/>
</dbReference>
<dbReference type="SUPFAM" id="SSF55957">
    <property type="entry name" value="Phosphoglucomutase, C-terminal domain"/>
    <property type="match status" value="1"/>
</dbReference>
<dbReference type="SUPFAM" id="SSF53738">
    <property type="entry name" value="Phosphoglucomutase, first 3 domains"/>
    <property type="match status" value="3"/>
</dbReference>
<dbReference type="PROSITE" id="PS00710">
    <property type="entry name" value="PGM_PMM"/>
    <property type="match status" value="1"/>
</dbReference>
<proteinExistence type="inferred from homology"/>
<organism>
    <name type="scientific">Listeria monocytogenes serovar 1/2a (strain ATCC BAA-679 / EGD-e)</name>
    <dbReference type="NCBI Taxonomy" id="169963"/>
    <lineage>
        <taxon>Bacteria</taxon>
        <taxon>Bacillati</taxon>
        <taxon>Bacillota</taxon>
        <taxon>Bacilli</taxon>
        <taxon>Bacillales</taxon>
        <taxon>Listeriaceae</taxon>
        <taxon>Listeria</taxon>
    </lineage>
</organism>
<protein>
    <recommendedName>
        <fullName evidence="1">Phosphoglucosamine mutase</fullName>
        <ecNumber evidence="1">5.4.2.10</ecNumber>
    </recommendedName>
</protein>
<comment type="function">
    <text evidence="1">Catalyzes the conversion of glucosamine-6-phosphate to glucosamine-1-phosphate.</text>
</comment>
<comment type="catalytic activity">
    <reaction evidence="1">
        <text>alpha-D-glucosamine 1-phosphate = D-glucosamine 6-phosphate</text>
        <dbReference type="Rhea" id="RHEA:23424"/>
        <dbReference type="ChEBI" id="CHEBI:58516"/>
        <dbReference type="ChEBI" id="CHEBI:58725"/>
        <dbReference type="EC" id="5.4.2.10"/>
    </reaction>
</comment>
<comment type="cofactor">
    <cofactor evidence="1">
        <name>Mg(2+)</name>
        <dbReference type="ChEBI" id="CHEBI:18420"/>
    </cofactor>
    <text evidence="1">Binds 1 Mg(2+) ion per subunit.</text>
</comment>
<comment type="PTM">
    <text evidence="1">Activated by phosphorylation.</text>
</comment>
<comment type="similarity">
    <text evidence="1">Belongs to the phosphohexose mutase family.</text>
</comment>